<proteinExistence type="inferred from homology"/>
<name>IF1_YERPS</name>
<accession>Q66CK8</accession>
<dbReference type="EMBL" id="BX936398">
    <property type="protein sequence ID" value="CAH20635.1"/>
    <property type="molecule type" value="Genomic_DNA"/>
</dbReference>
<dbReference type="RefSeq" id="WP_002211347.1">
    <property type="nucleotide sequence ID" value="NZ_CP009712.1"/>
</dbReference>
<dbReference type="SMR" id="Q66CK8"/>
<dbReference type="GeneID" id="98387575"/>
<dbReference type="KEGG" id="ypo:BZ17_1124"/>
<dbReference type="KEGG" id="yps:YPTB1395"/>
<dbReference type="PATRIC" id="fig|273123.14.peg.1193"/>
<dbReference type="Proteomes" id="UP000001011">
    <property type="component" value="Chromosome"/>
</dbReference>
<dbReference type="GO" id="GO:0005829">
    <property type="term" value="C:cytosol"/>
    <property type="evidence" value="ECO:0007669"/>
    <property type="project" value="TreeGrafter"/>
</dbReference>
<dbReference type="GO" id="GO:0043022">
    <property type="term" value="F:ribosome binding"/>
    <property type="evidence" value="ECO:0007669"/>
    <property type="project" value="UniProtKB-UniRule"/>
</dbReference>
<dbReference type="GO" id="GO:0019843">
    <property type="term" value="F:rRNA binding"/>
    <property type="evidence" value="ECO:0007669"/>
    <property type="project" value="UniProtKB-UniRule"/>
</dbReference>
<dbReference type="GO" id="GO:0003743">
    <property type="term" value="F:translation initiation factor activity"/>
    <property type="evidence" value="ECO:0007669"/>
    <property type="project" value="UniProtKB-UniRule"/>
</dbReference>
<dbReference type="CDD" id="cd04451">
    <property type="entry name" value="S1_IF1"/>
    <property type="match status" value="1"/>
</dbReference>
<dbReference type="FunFam" id="2.40.50.140:FF:000002">
    <property type="entry name" value="Translation initiation factor IF-1"/>
    <property type="match status" value="1"/>
</dbReference>
<dbReference type="Gene3D" id="2.40.50.140">
    <property type="entry name" value="Nucleic acid-binding proteins"/>
    <property type="match status" value="1"/>
</dbReference>
<dbReference type="HAMAP" id="MF_00075">
    <property type="entry name" value="IF_1"/>
    <property type="match status" value="1"/>
</dbReference>
<dbReference type="InterPro" id="IPR012340">
    <property type="entry name" value="NA-bd_OB-fold"/>
</dbReference>
<dbReference type="InterPro" id="IPR006196">
    <property type="entry name" value="RNA-binding_domain_S1_IF1"/>
</dbReference>
<dbReference type="InterPro" id="IPR003029">
    <property type="entry name" value="S1_domain"/>
</dbReference>
<dbReference type="InterPro" id="IPR004368">
    <property type="entry name" value="TIF_IF1"/>
</dbReference>
<dbReference type="NCBIfam" id="TIGR00008">
    <property type="entry name" value="infA"/>
    <property type="match status" value="1"/>
</dbReference>
<dbReference type="PANTHER" id="PTHR33370">
    <property type="entry name" value="TRANSLATION INITIATION FACTOR IF-1, CHLOROPLASTIC"/>
    <property type="match status" value="1"/>
</dbReference>
<dbReference type="PANTHER" id="PTHR33370:SF1">
    <property type="entry name" value="TRANSLATION INITIATION FACTOR IF-1, CHLOROPLASTIC"/>
    <property type="match status" value="1"/>
</dbReference>
<dbReference type="Pfam" id="PF01176">
    <property type="entry name" value="eIF-1a"/>
    <property type="match status" value="1"/>
</dbReference>
<dbReference type="SMART" id="SM00316">
    <property type="entry name" value="S1"/>
    <property type="match status" value="1"/>
</dbReference>
<dbReference type="SUPFAM" id="SSF50249">
    <property type="entry name" value="Nucleic acid-binding proteins"/>
    <property type="match status" value="1"/>
</dbReference>
<dbReference type="PROSITE" id="PS50832">
    <property type="entry name" value="S1_IF1_TYPE"/>
    <property type="match status" value="1"/>
</dbReference>
<keyword id="KW-0963">Cytoplasm</keyword>
<keyword id="KW-0396">Initiation factor</keyword>
<keyword id="KW-0648">Protein biosynthesis</keyword>
<keyword id="KW-0694">RNA-binding</keyword>
<keyword id="KW-0699">rRNA-binding</keyword>
<feature type="chain" id="PRO_0000095914" description="Translation initiation factor IF-1">
    <location>
        <begin position="1"/>
        <end position="72"/>
    </location>
</feature>
<feature type="domain" description="S1-like" evidence="1">
    <location>
        <begin position="1"/>
        <end position="72"/>
    </location>
</feature>
<sequence>MAKEDNIEMQGTVLDTLPNTMFRVELENGHVVTAHISGKMRKNYIRILTGDKVTVELTPYDLSKGRIVFRSR</sequence>
<comment type="function">
    <text evidence="1">One of the essential components for the initiation of protein synthesis. Stabilizes the binding of IF-2 and IF-3 on the 30S subunit to which N-formylmethionyl-tRNA(fMet) subsequently binds. Helps modulate mRNA selection, yielding the 30S pre-initiation complex (PIC). Upon addition of the 50S ribosomal subunit IF-1, IF-2 and IF-3 are released leaving the mature 70S translation initiation complex.</text>
</comment>
<comment type="subunit">
    <text evidence="1">Component of the 30S ribosomal translation pre-initiation complex which assembles on the 30S ribosome in the order IF-2 and IF-3, IF-1 and N-formylmethionyl-tRNA(fMet); mRNA recruitment can occur at any time during PIC assembly.</text>
</comment>
<comment type="subcellular location">
    <subcellularLocation>
        <location evidence="1">Cytoplasm</location>
    </subcellularLocation>
</comment>
<comment type="similarity">
    <text evidence="1">Belongs to the IF-1 family.</text>
</comment>
<reference key="1">
    <citation type="journal article" date="2004" name="Proc. Natl. Acad. Sci. U.S.A.">
        <title>Insights into the evolution of Yersinia pestis through whole-genome comparison with Yersinia pseudotuberculosis.</title>
        <authorList>
            <person name="Chain P.S.G."/>
            <person name="Carniel E."/>
            <person name="Larimer F.W."/>
            <person name="Lamerdin J."/>
            <person name="Stoutland P.O."/>
            <person name="Regala W.M."/>
            <person name="Georgescu A.M."/>
            <person name="Vergez L.M."/>
            <person name="Land M.L."/>
            <person name="Motin V.L."/>
            <person name="Brubaker R.R."/>
            <person name="Fowler J."/>
            <person name="Hinnebusch J."/>
            <person name="Marceau M."/>
            <person name="Medigue C."/>
            <person name="Simonet M."/>
            <person name="Chenal-Francisque V."/>
            <person name="Souza B."/>
            <person name="Dacheux D."/>
            <person name="Elliott J.M."/>
            <person name="Derbise A."/>
            <person name="Hauser L.J."/>
            <person name="Garcia E."/>
        </authorList>
    </citation>
    <scope>NUCLEOTIDE SEQUENCE [LARGE SCALE GENOMIC DNA]</scope>
    <source>
        <strain>IP32953</strain>
    </source>
</reference>
<organism>
    <name type="scientific">Yersinia pseudotuberculosis serotype I (strain IP32953)</name>
    <dbReference type="NCBI Taxonomy" id="273123"/>
    <lineage>
        <taxon>Bacteria</taxon>
        <taxon>Pseudomonadati</taxon>
        <taxon>Pseudomonadota</taxon>
        <taxon>Gammaproteobacteria</taxon>
        <taxon>Enterobacterales</taxon>
        <taxon>Yersiniaceae</taxon>
        <taxon>Yersinia</taxon>
    </lineage>
</organism>
<evidence type="ECO:0000255" key="1">
    <source>
        <dbReference type="HAMAP-Rule" id="MF_00075"/>
    </source>
</evidence>
<gene>
    <name evidence="1" type="primary">infA</name>
    <name type="ordered locus">YPTB1395</name>
</gene>
<protein>
    <recommendedName>
        <fullName evidence="1">Translation initiation factor IF-1</fullName>
    </recommendedName>
</protein>